<comment type="similarity">
    <text evidence="2">Belongs to the TRAFAC class YlqF/YawG GTPase family.</text>
</comment>
<sequence>MMVRVMRYKKVPVKKIVNKIIDECDVILLVLDARDPEMTRNRELEKKIKAKGKKLIYVLNKADLVPKDILEKWKEVFGENTVFVSAKRRLGTKILREMIKQSLKEMGKKEGKVGIVGYPNVGKSSIINALTGKRKALTGSVAGLTKGEQWVRLTKNIKLMDTPGVLEMRDEDDLVISGALRLEKVENPIPPALKILSRINNFDNSIIKEYFGVDYEEVDEELLKKIGNKRSYLTKGGEVDLVRTAKTIIKEYQDGKLNYYKVDLKKYGQDRERDISFITKYLKDFPFIEDAKMIVTHLKDFDGLYKKIKKPVLGSEEIDGNIVVVSFGEKTKDACRKKVENLCRERNIEVLSKFGDKIGANNIYVAVGKRVKE</sequence>
<evidence type="ECO:0000255" key="1"/>
<evidence type="ECO:0000255" key="2">
    <source>
        <dbReference type="PROSITE-ProRule" id="PRU01058"/>
    </source>
</evidence>
<organism>
    <name type="scientific">Methanocaldococcus jannaschii (strain ATCC 43067 / DSM 2661 / JAL-1 / JCM 10045 / NBRC 100440)</name>
    <name type="common">Methanococcus jannaschii</name>
    <dbReference type="NCBI Taxonomy" id="243232"/>
    <lineage>
        <taxon>Archaea</taxon>
        <taxon>Methanobacteriati</taxon>
        <taxon>Methanobacteriota</taxon>
        <taxon>Methanomada group</taxon>
        <taxon>Methanococci</taxon>
        <taxon>Methanococcales</taxon>
        <taxon>Methanocaldococcaceae</taxon>
        <taxon>Methanocaldococcus</taxon>
    </lineage>
</organism>
<proteinExistence type="inferred from homology"/>
<gene>
    <name type="ordered locus">MJ1464</name>
</gene>
<dbReference type="EMBL" id="L77117">
    <property type="protein sequence ID" value="AAB99472.1"/>
    <property type="molecule type" value="Genomic_DNA"/>
</dbReference>
<dbReference type="PIR" id="G64482">
    <property type="entry name" value="G64482"/>
</dbReference>
<dbReference type="SMR" id="Q58859"/>
<dbReference type="FunCoup" id="Q58859">
    <property type="interactions" value="145"/>
</dbReference>
<dbReference type="STRING" id="243232.MJ_1464"/>
<dbReference type="PaxDb" id="243232-MJ_1464"/>
<dbReference type="EnsemblBacteria" id="AAB99472">
    <property type="protein sequence ID" value="AAB99472"/>
    <property type="gene ID" value="MJ_1464"/>
</dbReference>
<dbReference type="KEGG" id="mja:MJ_1464"/>
<dbReference type="eggNOG" id="arCOG00350">
    <property type="taxonomic scope" value="Archaea"/>
</dbReference>
<dbReference type="HOGENOM" id="CLU_011106_1_2_2"/>
<dbReference type="InParanoid" id="Q58859"/>
<dbReference type="PhylomeDB" id="Q58859"/>
<dbReference type="Proteomes" id="UP000000805">
    <property type="component" value="Chromosome"/>
</dbReference>
<dbReference type="GO" id="GO:0005525">
    <property type="term" value="F:GTP binding"/>
    <property type="evidence" value="ECO:0007669"/>
    <property type="project" value="UniProtKB-KW"/>
</dbReference>
<dbReference type="CDD" id="cd01859">
    <property type="entry name" value="MJ1464"/>
    <property type="match status" value="1"/>
</dbReference>
<dbReference type="Gene3D" id="1.10.1580.10">
    <property type="match status" value="1"/>
</dbReference>
<dbReference type="Gene3D" id="3.40.50.300">
    <property type="entry name" value="P-loop containing nucleotide triphosphate hydrolases"/>
    <property type="match status" value="1"/>
</dbReference>
<dbReference type="InterPro" id="IPR030378">
    <property type="entry name" value="G_CP_dom"/>
</dbReference>
<dbReference type="InterPro" id="IPR006073">
    <property type="entry name" value="GTP-bd"/>
</dbReference>
<dbReference type="InterPro" id="IPR023179">
    <property type="entry name" value="GTP-bd_ortho_bundle_sf"/>
</dbReference>
<dbReference type="InterPro" id="IPR027417">
    <property type="entry name" value="P-loop_NTPase"/>
</dbReference>
<dbReference type="InterPro" id="IPR050755">
    <property type="entry name" value="TRAFAC_YlqF/YawG_RiboMat"/>
</dbReference>
<dbReference type="PANTHER" id="PTHR11089">
    <property type="entry name" value="GTP-BINDING PROTEIN-RELATED"/>
    <property type="match status" value="1"/>
</dbReference>
<dbReference type="PANTHER" id="PTHR11089:SF30">
    <property type="entry name" value="GUANINE NUCLEOTIDE-BINDING PROTEIN-LIKE 3 HOMOLOG"/>
    <property type="match status" value="1"/>
</dbReference>
<dbReference type="Pfam" id="PF01926">
    <property type="entry name" value="MMR_HSR1"/>
    <property type="match status" value="1"/>
</dbReference>
<dbReference type="PRINTS" id="PR00326">
    <property type="entry name" value="GTP1OBG"/>
</dbReference>
<dbReference type="SUPFAM" id="SSF52540">
    <property type="entry name" value="P-loop containing nucleoside triphosphate hydrolases"/>
    <property type="match status" value="1"/>
</dbReference>
<dbReference type="PROSITE" id="PS51721">
    <property type="entry name" value="G_CP"/>
    <property type="match status" value="1"/>
</dbReference>
<name>Y1464_METJA</name>
<feature type="chain" id="PRO_0000205447" description="Uncharacterized GTP-binding protein MJ1464">
    <location>
        <begin position="1"/>
        <end position="373"/>
    </location>
</feature>
<feature type="domain" description="CP-type G" evidence="2">
    <location>
        <begin position="14"/>
        <end position="168"/>
    </location>
</feature>
<feature type="binding site" evidence="1">
    <location>
        <begin position="117"/>
        <end position="124"/>
    </location>
    <ligand>
        <name>GTP</name>
        <dbReference type="ChEBI" id="CHEBI:37565"/>
    </ligand>
</feature>
<reference key="1">
    <citation type="journal article" date="1996" name="Science">
        <title>Complete genome sequence of the methanogenic archaeon, Methanococcus jannaschii.</title>
        <authorList>
            <person name="Bult C.J."/>
            <person name="White O."/>
            <person name="Olsen G.J."/>
            <person name="Zhou L."/>
            <person name="Fleischmann R.D."/>
            <person name="Sutton G.G."/>
            <person name="Blake J.A."/>
            <person name="FitzGerald L.M."/>
            <person name="Clayton R.A."/>
            <person name="Gocayne J.D."/>
            <person name="Kerlavage A.R."/>
            <person name="Dougherty B.A."/>
            <person name="Tomb J.-F."/>
            <person name="Adams M.D."/>
            <person name="Reich C.I."/>
            <person name="Overbeek R."/>
            <person name="Kirkness E.F."/>
            <person name="Weinstock K.G."/>
            <person name="Merrick J.M."/>
            <person name="Glodek A."/>
            <person name="Scott J.L."/>
            <person name="Geoghagen N.S.M."/>
            <person name="Weidman J.F."/>
            <person name="Fuhrmann J.L."/>
            <person name="Nguyen D."/>
            <person name="Utterback T.R."/>
            <person name="Kelley J.M."/>
            <person name="Peterson J.D."/>
            <person name="Sadow P.W."/>
            <person name="Hanna M.C."/>
            <person name="Cotton M.D."/>
            <person name="Roberts K.M."/>
            <person name="Hurst M.A."/>
            <person name="Kaine B.P."/>
            <person name="Borodovsky M."/>
            <person name="Klenk H.-P."/>
            <person name="Fraser C.M."/>
            <person name="Smith H.O."/>
            <person name="Woese C.R."/>
            <person name="Venter J.C."/>
        </authorList>
    </citation>
    <scope>NUCLEOTIDE SEQUENCE [LARGE SCALE GENOMIC DNA]</scope>
    <source>
        <strain>ATCC 43067 / DSM 2661 / JAL-1 / JCM 10045 / NBRC 100440</strain>
    </source>
</reference>
<accession>Q58859</accession>
<protein>
    <recommendedName>
        <fullName>Uncharacterized GTP-binding protein MJ1464</fullName>
    </recommendedName>
</protein>
<keyword id="KW-0342">GTP-binding</keyword>
<keyword id="KW-0547">Nucleotide-binding</keyword>
<keyword id="KW-1185">Reference proteome</keyword>